<feature type="initiator methionine" description="Removed" evidence="2">
    <location>
        <position position="1"/>
    </location>
</feature>
<feature type="chain" id="PRO_0000284916" description="E3 ubiquitin-protein ligase RNF139">
    <location>
        <begin position="2"/>
        <end position="664"/>
    </location>
</feature>
<feature type="transmembrane region" description="Helical" evidence="3">
    <location>
        <begin position="51"/>
        <end position="71"/>
    </location>
</feature>
<feature type="transmembrane region" description="Helical" evidence="3">
    <location>
        <begin position="85"/>
        <end position="105"/>
    </location>
</feature>
<feature type="transmembrane region" description="Helical" evidence="3">
    <location>
        <begin position="125"/>
        <end position="145"/>
    </location>
</feature>
<feature type="transmembrane region" description="Helical" evidence="3">
    <location>
        <begin position="154"/>
        <end position="174"/>
    </location>
</feature>
<feature type="transmembrane region" description="Helical" evidence="3">
    <location>
        <begin position="178"/>
        <end position="198"/>
    </location>
</feature>
<feature type="transmembrane region" description="Helical" evidence="3">
    <location>
        <begin position="293"/>
        <end position="313"/>
    </location>
</feature>
<feature type="transmembrane region" description="Helical" evidence="3">
    <location>
        <begin position="323"/>
        <end position="343"/>
    </location>
</feature>
<feature type="transmembrane region" description="Helical" evidence="3">
    <location>
        <begin position="356"/>
        <end position="376"/>
    </location>
</feature>
<feature type="transmembrane region" description="Helical" evidence="3">
    <location>
        <begin position="390"/>
        <end position="410"/>
    </location>
</feature>
<feature type="transmembrane region" description="Helical" evidence="3">
    <location>
        <begin position="420"/>
        <end position="440"/>
    </location>
</feature>
<feature type="transmembrane region" description="Helical" evidence="3">
    <location>
        <begin position="469"/>
        <end position="489"/>
    </location>
</feature>
<feature type="transmembrane region" description="Helical" evidence="3">
    <location>
        <begin position="495"/>
        <end position="512"/>
    </location>
</feature>
<feature type="zinc finger region" description="RING-type; atypical" evidence="4">
    <location>
        <begin position="547"/>
        <end position="586"/>
    </location>
</feature>
<feature type="region of interest" description="Disordered" evidence="5">
    <location>
        <begin position="599"/>
        <end position="664"/>
    </location>
</feature>
<feature type="compositionally biased region" description="Polar residues" evidence="5">
    <location>
        <begin position="599"/>
        <end position="610"/>
    </location>
</feature>
<feature type="compositionally biased region" description="Basic and acidic residues" evidence="5">
    <location>
        <begin position="616"/>
        <end position="628"/>
    </location>
</feature>
<feature type="compositionally biased region" description="Acidic residues" evidence="5">
    <location>
        <begin position="629"/>
        <end position="639"/>
    </location>
</feature>
<feature type="modified residue" description="N-acetylalanine" evidence="2">
    <location>
        <position position="2"/>
    </location>
</feature>
<feature type="modified residue" description="Phosphoserine" evidence="2">
    <location>
        <position position="634"/>
    </location>
</feature>
<feature type="modified residue" description="Phosphothreonine" evidence="2">
    <location>
        <position position="635"/>
    </location>
</feature>
<feature type="modified residue" description="Phosphothreonine" evidence="2">
    <location>
        <position position="663"/>
    </location>
</feature>
<evidence type="ECO:0000250" key="1"/>
<evidence type="ECO:0000250" key="2">
    <source>
        <dbReference type="UniProtKB" id="Q8WU17"/>
    </source>
</evidence>
<evidence type="ECO:0000255" key="3"/>
<evidence type="ECO:0000255" key="4">
    <source>
        <dbReference type="PROSITE-ProRule" id="PRU00175"/>
    </source>
</evidence>
<evidence type="ECO:0000256" key="5">
    <source>
        <dbReference type="SAM" id="MobiDB-lite"/>
    </source>
</evidence>
<evidence type="ECO:0000305" key="6"/>
<gene>
    <name type="primary">RNF139</name>
</gene>
<proteinExistence type="evidence at transcript level"/>
<accession>Q5RBT7</accession>
<sequence length="664" mass="75941">MAAVGPPQQQVRMAHRQVWAALEVALRVPCLYIIDAIFNSYPDSSQSRFCIVLQIFLRLLGIFVSSIVLILSQRSLFKFYMYSSAFLLAATSVLVNYYASLHIDFYGAYNTSAFGIELLPRKGPSLWMALIVLQLTFGIGYVTLLQIHSIYSQLIILDLLVPVIGLITELPLHIRETLVFTSSLILTLNTVLVLAVKLKWFYYSTRYVYLLVRHMYRIYGLQLLMEDTWKRIRFPDILRVFWLTRVTAQATVLMYILRMANETDSFFISWDDFWDLICNLIISGCDSTLTVLGMSAVISSVAHYLGLGILAFIGSTEEDDRRLGFVAPVLFFILALQTGLSGLRPEERLIRLSRNMCLLLTAVLHFIHGMTDPVLMSLSASHVSSFRRHFPVLFVSACLFILPVLLSYVLWHHYALNTWLFAATAFCVELCLKVIVSLTVYTLFMIDGYYNVLWEKLDNYVYYVRSTGSIIVFIFGVVMFGNGAYTMMFESGSKIRAFMMCLHAYFNIYLQAKNGWKTFMNRRTAVKKINSLPEIKGSRLQEINDVCAICYHEFTTSARITPCNHYFHALCLRKWLYIQDTCPMCHQKVYIEDDIKDNSNVSNNNGFTPPNETPEEAVREAAAESDRELNEDDSTDCDDDVQRERNGVIQHTGAAAEEFNDDTD</sequence>
<organism>
    <name type="scientific">Pongo abelii</name>
    <name type="common">Sumatran orangutan</name>
    <name type="synonym">Pongo pygmaeus abelii</name>
    <dbReference type="NCBI Taxonomy" id="9601"/>
    <lineage>
        <taxon>Eukaryota</taxon>
        <taxon>Metazoa</taxon>
        <taxon>Chordata</taxon>
        <taxon>Craniata</taxon>
        <taxon>Vertebrata</taxon>
        <taxon>Euteleostomi</taxon>
        <taxon>Mammalia</taxon>
        <taxon>Eutheria</taxon>
        <taxon>Euarchontoglires</taxon>
        <taxon>Primates</taxon>
        <taxon>Haplorrhini</taxon>
        <taxon>Catarrhini</taxon>
        <taxon>Hominidae</taxon>
        <taxon>Pongo</taxon>
    </lineage>
</organism>
<comment type="function">
    <text evidence="2">E3-ubiquitin ligase; acts as a negative regulator of cell proliferation through mechanisms involving G2/M arrest and cell death. Required for MHC class I ubiquitination in cells expressing the cytomegalovirus protein US2 before dislocation from the endoplasmic reticulum (ER). Affects SREBP processing by hindering the SREBP-SCAP complex translocation from the ER to the Golgi, thereby reducing SREBF2 target gene expression. Involved in the sterol-accelerated degradation of HMGCR. This is achieved through binding to INSIG1 and/or INSIG2 at the ER membrane. In addition, interaction of RNF139 with AUP1 facilitates interaction of RNF139 with ubiquitin-conjugating enzyme UBE2G2 and ubiquitin ligase AMFR, leading to ubiquitination of HMGCR. The ubiquitinated HMGCR is then released from the ER by the complex into the cytosol for subsequent destruction. Required for INSIG1 ubiquitination. May be required for EIF3 complex ubiquitination.</text>
</comment>
<comment type="catalytic activity">
    <reaction evidence="2">
        <text>S-ubiquitinyl-[E2 ubiquitin-conjugating enzyme]-L-cysteine + [acceptor protein]-L-lysine = [E2 ubiquitin-conjugating enzyme]-L-cysteine + N(6)-ubiquitinyl-[acceptor protein]-L-lysine.</text>
        <dbReference type="EC" id="2.3.2.27"/>
    </reaction>
</comment>
<comment type="pathway">
    <text evidence="2">Protein modification; protein ubiquitination.</text>
</comment>
<comment type="subunit">
    <text evidence="2">Interacts with VHL. Interacts with MHC class I and HM13. Component of SCAP-SREBP complex composed of SREBF2, SCAP and RNF139; the complex hampers the interaction between SCAP and SEC24B, thereby reducing SREBF2 proteolytic processing. Interacts with SREBF2 (via C-terminal domain). Interacts with SCAP; the interaction inhibits the interaction of SCAP with SEC24B and hampering the ER to Golgi transport of the SCAP-SREBP complex. Interacts with SEC24B. Interacts with INSIG1 and INSIG2. Interacts with EIF3F and EIF3H; the interaction leads to protein translation inhibitions in a ubiquitination-dependent manner. Interacts with XBP1; the interaction induces ubiquitination and degradation of XBP1. Interacts with AUP1, AMFR and UBE2G2; interaction with AUP1 facilitates interaction of RNF139 with ubiquitin-conjugating enzyme UBE2G2 and ubiquitin ligase AMFR/gp78, leading to sterol-induced ubiquitination of HMGCR and its subsequent proteasomal degradation.</text>
</comment>
<comment type="subcellular location">
    <subcellularLocation>
        <location evidence="2">Endoplasmic reticulum membrane</location>
        <topology evidence="2">Multi-pass membrane protein</topology>
    </subcellularLocation>
</comment>
<comment type="domain">
    <text evidence="1">The RING-type zinc finger domain may be essential for ubiquitin ligase activity.</text>
</comment>
<comment type="PTM">
    <text evidence="2">Autoubiquitinated. Ubiquitination is induced by sterol and leads to ist degradation via the ubiquitin-proteasome pathway.</text>
</comment>
<name>RN139_PONAB</name>
<dbReference type="EC" id="2.3.2.27" evidence="2"/>
<dbReference type="EMBL" id="CR858546">
    <property type="protein sequence ID" value="CAH90773.1"/>
    <property type="molecule type" value="mRNA"/>
</dbReference>
<dbReference type="SMR" id="Q5RBT7"/>
<dbReference type="FunCoup" id="Q5RBT7">
    <property type="interactions" value="3038"/>
</dbReference>
<dbReference type="STRING" id="9601.ENSPPYP00000021168"/>
<dbReference type="eggNOG" id="KOG0802">
    <property type="taxonomic scope" value="Eukaryota"/>
</dbReference>
<dbReference type="InParanoid" id="Q5RBT7"/>
<dbReference type="UniPathway" id="UPA00143"/>
<dbReference type="Proteomes" id="UP000001595">
    <property type="component" value="Unplaced"/>
</dbReference>
<dbReference type="GO" id="GO:0036513">
    <property type="term" value="C:Derlin-1 retrotranslocation complex"/>
    <property type="evidence" value="ECO:0007669"/>
    <property type="project" value="TreeGrafter"/>
</dbReference>
<dbReference type="GO" id="GO:0061630">
    <property type="term" value="F:ubiquitin protein ligase activity"/>
    <property type="evidence" value="ECO:0007669"/>
    <property type="project" value="TreeGrafter"/>
</dbReference>
<dbReference type="GO" id="GO:0008270">
    <property type="term" value="F:zinc ion binding"/>
    <property type="evidence" value="ECO:0007669"/>
    <property type="project" value="UniProtKB-KW"/>
</dbReference>
<dbReference type="GO" id="GO:0036503">
    <property type="term" value="P:ERAD pathway"/>
    <property type="evidence" value="ECO:0007669"/>
    <property type="project" value="TreeGrafter"/>
</dbReference>
<dbReference type="GO" id="GO:2000060">
    <property type="term" value="P:positive regulation of ubiquitin-dependent protein catabolic process"/>
    <property type="evidence" value="ECO:0000250"/>
    <property type="project" value="UniProtKB"/>
</dbReference>
<dbReference type="GO" id="GO:0043161">
    <property type="term" value="P:proteasome-mediated ubiquitin-dependent protein catabolic process"/>
    <property type="evidence" value="ECO:0007669"/>
    <property type="project" value="TreeGrafter"/>
</dbReference>
<dbReference type="GO" id="GO:0031648">
    <property type="term" value="P:protein destabilization"/>
    <property type="evidence" value="ECO:0000250"/>
    <property type="project" value="UniProtKB"/>
</dbReference>
<dbReference type="GO" id="GO:0016567">
    <property type="term" value="P:protein ubiquitination"/>
    <property type="evidence" value="ECO:0007669"/>
    <property type="project" value="UniProtKB-UniPathway"/>
</dbReference>
<dbReference type="CDD" id="cd16683">
    <property type="entry name" value="RING-H2_RNF139"/>
    <property type="match status" value="1"/>
</dbReference>
<dbReference type="FunFam" id="3.30.40.10:FF:000166">
    <property type="entry name" value="E3 ubiquitin-protein ligase RNF139"/>
    <property type="match status" value="1"/>
</dbReference>
<dbReference type="Gene3D" id="3.30.40.10">
    <property type="entry name" value="Zinc/RING finger domain, C3HC4 (zinc finger)"/>
    <property type="match status" value="1"/>
</dbReference>
<dbReference type="InterPro" id="IPR050731">
    <property type="entry name" value="HRD1_E3_ubiq-ligases"/>
</dbReference>
<dbReference type="InterPro" id="IPR025754">
    <property type="entry name" value="TRC8_N_dom"/>
</dbReference>
<dbReference type="InterPro" id="IPR001841">
    <property type="entry name" value="Znf_RING"/>
</dbReference>
<dbReference type="InterPro" id="IPR011016">
    <property type="entry name" value="Znf_RING-CH"/>
</dbReference>
<dbReference type="InterPro" id="IPR013083">
    <property type="entry name" value="Znf_RING/FYVE/PHD"/>
</dbReference>
<dbReference type="PANTHER" id="PTHR22763:SF163">
    <property type="entry name" value="E3 UBIQUITIN-PROTEIN LIGASE RNF139"/>
    <property type="match status" value="1"/>
</dbReference>
<dbReference type="PANTHER" id="PTHR22763">
    <property type="entry name" value="RING ZINC FINGER PROTEIN"/>
    <property type="match status" value="1"/>
</dbReference>
<dbReference type="Pfam" id="PF13705">
    <property type="entry name" value="TRC8_N"/>
    <property type="match status" value="1"/>
</dbReference>
<dbReference type="Pfam" id="PF13639">
    <property type="entry name" value="zf-RING_2"/>
    <property type="match status" value="1"/>
</dbReference>
<dbReference type="SMART" id="SM00184">
    <property type="entry name" value="RING"/>
    <property type="match status" value="1"/>
</dbReference>
<dbReference type="SMART" id="SM00744">
    <property type="entry name" value="RINGv"/>
    <property type="match status" value="1"/>
</dbReference>
<dbReference type="SUPFAM" id="SSF57850">
    <property type="entry name" value="RING/U-box"/>
    <property type="match status" value="1"/>
</dbReference>
<dbReference type="PROSITE" id="PS50089">
    <property type="entry name" value="ZF_RING_2"/>
    <property type="match status" value="1"/>
</dbReference>
<protein>
    <recommendedName>
        <fullName>E3 ubiquitin-protein ligase RNF139</fullName>
        <ecNumber evidence="2">2.3.2.27</ecNumber>
    </recommendedName>
    <alternativeName>
        <fullName>RING finger protein 139</fullName>
    </alternativeName>
    <alternativeName>
        <fullName evidence="6">RING-type E3 ubiquitin transferase RNF139</fullName>
    </alternativeName>
    <alternativeName>
        <fullName>Translocation in renal carcinoma on chromosome 8 protein</fullName>
    </alternativeName>
</protein>
<reference key="1">
    <citation type="submission" date="2004-11" db="EMBL/GenBank/DDBJ databases">
        <authorList>
            <consortium name="The German cDNA consortium"/>
        </authorList>
    </citation>
    <scope>NUCLEOTIDE SEQUENCE [LARGE SCALE MRNA]</scope>
    <source>
        <tissue>Kidney</tissue>
    </source>
</reference>
<keyword id="KW-0007">Acetylation</keyword>
<keyword id="KW-0256">Endoplasmic reticulum</keyword>
<keyword id="KW-0472">Membrane</keyword>
<keyword id="KW-0479">Metal-binding</keyword>
<keyword id="KW-0597">Phosphoprotein</keyword>
<keyword id="KW-0675">Receptor</keyword>
<keyword id="KW-1185">Reference proteome</keyword>
<keyword id="KW-0808">Transferase</keyword>
<keyword id="KW-0812">Transmembrane</keyword>
<keyword id="KW-1133">Transmembrane helix</keyword>
<keyword id="KW-0832">Ubl conjugation</keyword>
<keyword id="KW-0833">Ubl conjugation pathway</keyword>
<keyword id="KW-0862">Zinc</keyword>
<keyword id="KW-0863">Zinc-finger</keyword>